<organism>
    <name type="scientific">Drosophila melanogaster</name>
    <name type="common">Fruit fly</name>
    <dbReference type="NCBI Taxonomy" id="7227"/>
    <lineage>
        <taxon>Eukaryota</taxon>
        <taxon>Metazoa</taxon>
        <taxon>Ecdysozoa</taxon>
        <taxon>Arthropoda</taxon>
        <taxon>Hexapoda</taxon>
        <taxon>Insecta</taxon>
        <taxon>Pterygota</taxon>
        <taxon>Neoptera</taxon>
        <taxon>Endopterygota</taxon>
        <taxon>Diptera</taxon>
        <taxon>Brachycera</taxon>
        <taxon>Muscomorpha</taxon>
        <taxon>Ephydroidea</taxon>
        <taxon>Drosophilidae</taxon>
        <taxon>Drosophila</taxon>
        <taxon>Sophophora</taxon>
    </lineage>
</organism>
<sequence length="980" mass="104824">MAMKKLYAKTSFTSKKPSSAANSTPILAYHQQQHQQPGNGICEFQVVAPGHSGELMIRRSQSMHHKMSPPVGGLGSKSEYYSIEELQELDLLDYRHPMYHHYQQQELRQRYHEHEQLVLQLPKATSPKAGPIYEAPQRSQQQQDQMLYVPTAAQRDSSSSAAATSIASSSTLTSSPSPSSSSSLIFSTLRKCVSPSNPSVNPNQPSKTQPSKLGCSMSFSIRTTTATAATAAAANAATATLSTQQQQQQAQQQHKQHLYSNIHHYLIRQQQQKQHYTLQRRHNSVKDKFIGGITTIFAEQSIIGARASVMVYDDNQKKWVPSGSSSGLSKVQIYHHQQNNTFRVVGRKLQDHEVVINCSILKGLKYNQATATFHQWRDSKFVYGLNFSSQNDAENFARAMMHALEVLSGRVANNPGGPPTNGNGYEEDMGYRTMTSEDAAILRQNNSIGGHVTPSAQTPTSQTNQNNIPQSPPTPQGHHRTSSAPPAPQPQQQQQQQQAQQMGQPGSHYGPTGNGPTSNGLPQQVNSQIPPAPQQQPQQQQFQQQQQQQQYQQMVQAGYAPSQQYQQPHYVLSNSNPNLTVHQYPTQQAQQQPPQAPQPPLQNGGMYMVGHGHLPSSASANSVVYASQQQMLPQAHPQAPQAPTMPGPGYGGPPVPPPQQQAENPYGQVPMPPPMNPSQQQQPGQVPLNRMSSQGGPGGPPAPAPPPPPPSFGGAAGGGPPPPAPPQMFNGAPPPPAMGGGPPPAPPAPPAMGGGPPPAPGGPGAPPPPPPPPGLGGAPKKEDPQADLMGSLASQLQQIKLKKNKVTTSAPENSGSSTSSGGSGNYGTIGRSSNGMASMMDEMAKTLARRRAQAEKKDPDPEAEVKKRPWEKSNTLPHKLSGGAGSGSAGSGHEGANGNSGGAGSNTTNSGGESPRPMRKRFGSASEETILKVNGDGLSLALSNGDLDTLKAEIVREMRLEIQKVKNEIIDAIKSEFNRR</sequence>
<accession>Q8T4F7</accession>
<accession>A4UZP3</accession>
<accession>B7YZL0</accession>
<accession>Q24035</accession>
<accession>Q86NN6</accession>
<accession>Q8MMB3</accession>
<accession>Q9V8R3</accession>
<protein>
    <recommendedName>
        <fullName>Protein enabled</fullName>
    </recommendedName>
</protein>
<keyword id="KW-0009">Actin-binding</keyword>
<keyword id="KW-0025">Alternative splicing</keyword>
<keyword id="KW-0966">Cell projection</keyword>
<keyword id="KW-0963">Cytoplasm</keyword>
<keyword id="KW-0206">Cytoskeleton</keyword>
<keyword id="KW-0597">Phosphoprotein</keyword>
<keyword id="KW-1185">Reference proteome</keyword>
<keyword id="KW-0729">SH3-binding</keyword>
<feature type="chain" id="PRO_0000227757" description="Protein enabled">
    <location>
        <begin position="1"/>
        <end position="980"/>
    </location>
</feature>
<feature type="domain" description="WH1" evidence="1">
    <location>
        <begin position="146"/>
        <end position="407"/>
    </location>
</feature>
<feature type="region of interest" description="Disordered" evidence="2">
    <location>
        <begin position="125"/>
        <end position="145"/>
    </location>
</feature>
<feature type="region of interest" description="Disordered" evidence="2">
    <location>
        <begin position="194"/>
        <end position="213"/>
    </location>
</feature>
<feature type="region of interest" description="Disordered" evidence="2">
    <location>
        <begin position="448"/>
        <end position="547"/>
    </location>
</feature>
<feature type="region of interest" description="Disordered" evidence="2">
    <location>
        <begin position="570"/>
        <end position="614"/>
    </location>
</feature>
<feature type="region of interest" description="Disordered" evidence="2">
    <location>
        <begin position="630"/>
        <end position="927"/>
    </location>
</feature>
<feature type="region of interest" description="EVH2">
    <location>
        <begin position="791"/>
        <end position="980"/>
    </location>
</feature>
<feature type="region of interest" description="EVH2 block A">
    <location>
        <begin position="791"/>
        <end position="810"/>
    </location>
</feature>
<feature type="region of interest" description="EVH2 block B">
    <location>
        <begin position="837"/>
        <end position="854"/>
    </location>
</feature>
<feature type="region of interest" description="EVH2 block C">
    <location>
        <begin position="947"/>
        <end position="980"/>
    </location>
</feature>
<feature type="short sequence motif" description="KLKR">
    <location>
        <begin position="800"/>
        <end position="803"/>
    </location>
</feature>
<feature type="compositionally biased region" description="Low complexity" evidence="2">
    <location>
        <begin position="194"/>
        <end position="206"/>
    </location>
</feature>
<feature type="compositionally biased region" description="Polar residues" evidence="2">
    <location>
        <begin position="448"/>
        <end position="469"/>
    </location>
</feature>
<feature type="compositionally biased region" description="Low complexity" evidence="2">
    <location>
        <begin position="490"/>
        <end position="501"/>
    </location>
</feature>
<feature type="compositionally biased region" description="Polar residues" evidence="2">
    <location>
        <begin position="514"/>
        <end position="527"/>
    </location>
</feature>
<feature type="compositionally biased region" description="Low complexity" evidence="2">
    <location>
        <begin position="535"/>
        <end position="547"/>
    </location>
</feature>
<feature type="compositionally biased region" description="Polar residues" evidence="2">
    <location>
        <begin position="570"/>
        <end position="581"/>
    </location>
</feature>
<feature type="compositionally biased region" description="Low complexity" evidence="2">
    <location>
        <begin position="583"/>
        <end position="593"/>
    </location>
</feature>
<feature type="compositionally biased region" description="Low complexity" evidence="2">
    <location>
        <begin position="630"/>
        <end position="642"/>
    </location>
</feature>
<feature type="compositionally biased region" description="Pro residues" evidence="2">
    <location>
        <begin position="643"/>
        <end position="659"/>
    </location>
</feature>
<feature type="compositionally biased region" description="Low complexity" evidence="2">
    <location>
        <begin position="677"/>
        <end position="687"/>
    </location>
</feature>
<feature type="compositionally biased region" description="Pro residues" evidence="2">
    <location>
        <begin position="698"/>
        <end position="711"/>
    </location>
</feature>
<feature type="compositionally biased region" description="Pro residues" evidence="2">
    <location>
        <begin position="719"/>
        <end position="774"/>
    </location>
</feature>
<feature type="compositionally biased region" description="Basic and acidic residues" evidence="2">
    <location>
        <begin position="852"/>
        <end position="871"/>
    </location>
</feature>
<feature type="compositionally biased region" description="Gly residues" evidence="2">
    <location>
        <begin position="882"/>
        <end position="904"/>
    </location>
</feature>
<feature type="compositionally biased region" description="Low complexity" evidence="2">
    <location>
        <begin position="905"/>
        <end position="914"/>
    </location>
</feature>
<feature type="modified residue" description="Phosphotyrosine" evidence="11">
    <location>
        <position position="425"/>
    </location>
</feature>
<feature type="modified residue" description="Phosphotyrosine" evidence="11">
    <location>
        <position position="607"/>
    </location>
</feature>
<feature type="modified residue" description="Phosphotyrosine" evidence="11">
    <location>
        <position position="625"/>
    </location>
</feature>
<feature type="modified residue" description="Phosphotyrosine" evidence="11">
    <location>
        <position position="650"/>
    </location>
</feature>
<feature type="modified residue" description="Phosphotyrosine" evidence="11">
    <location>
        <position position="666"/>
    </location>
</feature>
<feature type="modified residue" description="Phosphotyrosine" evidence="11">
    <location>
        <position position="826"/>
    </location>
</feature>
<feature type="modified residue" description="Phosphoserine" evidence="9">
    <location>
        <position position="905"/>
    </location>
</feature>
<feature type="modified residue" description="Phosphoserine" evidence="9">
    <location>
        <position position="914"/>
    </location>
</feature>
<feature type="modified residue" description="Phosphoserine" evidence="8 9">
    <location>
        <position position="924"/>
    </location>
</feature>
<feature type="splice variant" id="VSP_017574" description="In isoform 2 and isoform 3." evidence="13">
    <location>
        <begin position="2"/>
        <end position="297"/>
    </location>
</feature>
<feature type="splice variant" id="VSP_037651" description="In isoform 1." evidence="12">
    <original>L</original>
    <variation>F</variation>
    <location>
        <position position="147"/>
    </location>
</feature>
<feature type="splice variant" id="VSP_037652" description="In isoform 1." evidence="12">
    <location>
        <begin position="148"/>
        <end position="298"/>
    </location>
</feature>
<feature type="splice variant" id="VSP_017575" description="In isoform 2 and isoform 3." evidence="13">
    <original>A</original>
    <variation>T</variation>
    <location>
        <position position="298"/>
    </location>
</feature>
<feature type="splice variant" id="VSP_019865" description="In isoform 1 and isoform 3." evidence="12 13">
    <original>S</original>
    <variation>SRNSL</variation>
    <location>
        <position position="482"/>
    </location>
</feature>
<feature type="splice variant" id="VSP_019866" description="In isoform 3." evidence="13">
    <location>
        <position position="563"/>
    </location>
</feature>
<feature type="splice variant" id="VSP_037653" description="In isoform 1." evidence="12">
    <original>K</original>
    <variation>KQ</variation>
    <location>
        <position position="932"/>
    </location>
</feature>
<feature type="sequence conflict" description="In Ref. 4; AAL89948." evidence="14" ref="4">
    <original>Q</original>
    <variation>H</variation>
    <location>
        <position position="120"/>
    </location>
</feature>
<feature type="sequence conflict" description="In Ref. 4; AAL89948." evidence="14" ref="4">
    <location>
        <begin position="491"/>
        <end position="493"/>
    </location>
</feature>
<feature type="sequence conflict" description="In Ref. 1; AAA85120." evidence="14" ref="1">
    <original>G</original>
    <variation>S</variation>
    <location>
        <position position="612"/>
    </location>
</feature>
<feature type="sequence conflict" description="In Ref. 1; AAA85120 and 4; AAL89948." evidence="14" ref="1 4">
    <original>I</original>
    <variation>F</variation>
    <location>
        <position position="799"/>
    </location>
</feature>
<proteinExistence type="evidence at protein level"/>
<gene>
    <name type="primary">ena</name>
    <name type="synonym">enb</name>
    <name type="ORF">CG15112</name>
</gene>
<comment type="function">
    <text evidence="7">Functions, together with Abl, trio and fra, in a complex signaling network that regulates axon guidance at the CNS midline. Required in part for robo-mediated repulsive axon guidance. May be involved in lamellipodial dynamics.</text>
</comment>
<comment type="subunit">
    <text evidence="3 4 5 10">Interacts with Abl and Src SH3 domains. Binds, in vitro and in vivo, the cytoplasmic domain of robo. Interacts with Zyx102EF and chic.</text>
</comment>
<comment type="interaction">
    <interactant intactId="EBI-466810">
        <id>Q8T4F7</id>
    </interactant>
    <interactant intactId="EBI-534090">
        <id>P00522</id>
        <label>Abl</label>
    </interactant>
    <organismsDiffer>false</organismsDiffer>
    <experiments>2</experiments>
</comment>
<comment type="interaction">
    <interactant intactId="EBI-466810">
        <id>Q8T4F7</id>
    </interactant>
    <interactant intactId="EBI-156199">
        <id>P25843</id>
        <label>chic</label>
    </interactant>
    <organismsDiffer>false</organismsDiffer>
    <experiments>3</experiments>
</comment>
<comment type="interaction">
    <interactant intactId="EBI-466810">
        <id>Q8T4F7</id>
    </interactant>
    <interactant intactId="EBI-668630">
        <id>P16621</id>
        <label>Lar</label>
    </interactant>
    <organismsDiffer>false</organismsDiffer>
    <experiments>2</experiments>
</comment>
<comment type="interaction">
    <interactant intactId="EBI-466810">
        <id>Q8T4F7</id>
    </interactant>
    <interactant intactId="EBI-298680">
        <id>P05480</id>
        <label>Src</label>
    </interactant>
    <organismsDiffer>true</organismsDiffer>
    <experiments>2</experiments>
</comment>
<comment type="subcellular location">
    <subcellularLocation>
        <location evidence="6">Cell projection</location>
        <location evidence="6">Lamellipodium</location>
    </subcellularLocation>
    <subcellularLocation>
        <location evidence="6">Cytoplasm</location>
        <location evidence="6">Cytoskeleton</location>
    </subcellularLocation>
    <text>Expressed at the leading edge of lamellipodia. Colocalizes with chic at the periphery of cells.</text>
</comment>
<comment type="alternative products">
    <event type="alternative splicing"/>
    <isoform>
        <id>Q8T4F7-4</id>
        <name>4</name>
        <name>F</name>
        <sequence type="displayed"/>
    </isoform>
    <isoform>
        <id>Q8T4F7-1</id>
        <name>1</name>
        <name>B</name>
        <sequence type="described" ref="VSP_037651 VSP_037652 VSP_019865 VSP_037653"/>
    </isoform>
    <isoform>
        <id>Q8T4F7-2</id>
        <name>2</name>
        <name>A</name>
        <name>C</name>
        <name>E</name>
        <sequence type="described" ref="VSP_017574 VSP_017575"/>
    </isoform>
    <isoform>
        <id>Q8T4F7-3</id>
        <name>3</name>
        <name>D</name>
        <sequence type="described" ref="VSP_017574 VSP_017575 VSP_019865 VSP_019866"/>
    </isoform>
</comment>
<comment type="tissue specificity">
    <text evidence="10">Expressed in axons of the embryonic nervous system.</text>
</comment>
<comment type="domain">
    <text>The EVH2 domain is comprised of 3 regions. Block A is a thymosin-like domain required for G-actin binding. The KLKR motif within this block is essential for the G-actin binding and for actin polymerization. Block B is required for F-actin binding and subcellular location, and Block C for tetramerization.</text>
</comment>
<comment type="PTM">
    <text evidence="8 9 10 11">Tyrosine phosphorylated on multiple sites by Abl kinase. In vitro, phosphorylation on specific tyrosine residues inhibits interaction with Abl and Src SH3 domains.</text>
</comment>
<comment type="similarity">
    <text evidence="14">Belongs to the Ena/VASP family.</text>
</comment>
<evidence type="ECO:0000255" key="1">
    <source>
        <dbReference type="PROSITE-ProRule" id="PRU00410"/>
    </source>
</evidence>
<evidence type="ECO:0000256" key="2">
    <source>
        <dbReference type="SAM" id="MobiDB-lite"/>
    </source>
</evidence>
<evidence type="ECO:0000269" key="3">
    <source>
    </source>
</evidence>
<evidence type="ECO:0000269" key="4">
    <source>
    </source>
</evidence>
<evidence type="ECO:0000269" key="5">
    <source>
    </source>
</evidence>
<evidence type="ECO:0000269" key="6">
    <source>
    </source>
</evidence>
<evidence type="ECO:0000269" key="7">
    <source>
    </source>
</evidence>
<evidence type="ECO:0000269" key="8">
    <source>
    </source>
</evidence>
<evidence type="ECO:0000269" key="9">
    <source>
    </source>
</evidence>
<evidence type="ECO:0000269" key="10">
    <source>
    </source>
</evidence>
<evidence type="ECO:0000269" key="11">
    <source>
    </source>
</evidence>
<evidence type="ECO:0000303" key="12">
    <source>
    </source>
</evidence>
<evidence type="ECO:0000303" key="13">
    <source ref="5"/>
</evidence>
<evidence type="ECO:0000305" key="14"/>
<name>ENA_DROME</name>
<dbReference type="EMBL" id="U21123">
    <property type="protein sequence ID" value="AAA85120.1"/>
    <property type="molecule type" value="Genomic_DNA"/>
</dbReference>
<dbReference type="EMBL" id="AE013599">
    <property type="protein sequence ID" value="AAF57598.2"/>
    <property type="molecule type" value="Genomic_DNA"/>
</dbReference>
<dbReference type="EMBL" id="AE013599">
    <property type="protein sequence ID" value="AAM68438.2"/>
    <property type="molecule type" value="Genomic_DNA"/>
</dbReference>
<dbReference type="EMBL" id="AE013599">
    <property type="protein sequence ID" value="AAM68439.2"/>
    <property type="molecule type" value="Genomic_DNA"/>
</dbReference>
<dbReference type="EMBL" id="AE013599">
    <property type="protein sequence ID" value="AAX52696.1"/>
    <property type="molecule type" value="Genomic_DNA"/>
</dbReference>
<dbReference type="EMBL" id="AE013599">
    <property type="protein sequence ID" value="AAX52697.1"/>
    <property type="molecule type" value="Genomic_DNA"/>
</dbReference>
<dbReference type="EMBL" id="AE013599">
    <property type="protein sequence ID" value="ACL83163.1"/>
    <property type="molecule type" value="Genomic_DNA"/>
</dbReference>
<dbReference type="EMBL" id="AY084210">
    <property type="protein sequence ID" value="AAL89948.1"/>
    <property type="molecule type" value="mRNA"/>
</dbReference>
<dbReference type="EMBL" id="BT004488">
    <property type="protein sequence ID" value="AAO42652.1"/>
    <property type="molecule type" value="mRNA"/>
</dbReference>
<dbReference type="PIR" id="A56154">
    <property type="entry name" value="A56154"/>
</dbReference>
<dbReference type="RefSeq" id="NP_001014536.1">
    <molecule id="Q8T4F7-2"/>
    <property type="nucleotide sequence ID" value="NM_001014536.2"/>
</dbReference>
<dbReference type="RefSeq" id="NP_001014537.1">
    <molecule id="Q8T4F7-3"/>
    <property type="nucleotide sequence ID" value="NM_001014537.3"/>
</dbReference>
<dbReference type="RefSeq" id="NP_001137709.1">
    <molecule id="Q8T4F7-4"/>
    <property type="nucleotide sequence ID" value="NM_001144237.2"/>
</dbReference>
<dbReference type="RefSeq" id="NP_725857.1">
    <molecule id="Q8T4F7-2"/>
    <property type="nucleotide sequence ID" value="NM_166329.2"/>
</dbReference>
<dbReference type="RefSeq" id="NP_725858.1">
    <molecule id="Q8T4F7-2"/>
    <property type="nucleotide sequence ID" value="NM_166330.2"/>
</dbReference>
<dbReference type="RefSeq" id="NP_725859.2">
    <molecule id="Q8T4F7-1"/>
    <property type="nucleotide sequence ID" value="NM_166331.3"/>
</dbReference>
<dbReference type="SMR" id="Q8T4F7"/>
<dbReference type="BioGRID" id="62866">
    <property type="interactions" value="68"/>
</dbReference>
<dbReference type="FunCoup" id="Q8T4F7">
    <property type="interactions" value="200"/>
</dbReference>
<dbReference type="IntAct" id="Q8T4F7">
    <property type="interactions" value="66"/>
</dbReference>
<dbReference type="STRING" id="7227.FBpp0113115"/>
<dbReference type="GlyGen" id="Q8T4F7">
    <property type="glycosylation" value="2 sites"/>
</dbReference>
<dbReference type="iPTMnet" id="Q8T4F7"/>
<dbReference type="PaxDb" id="7227-FBpp0113115"/>
<dbReference type="EnsemblMetazoa" id="FBtr0086582">
    <molecule id="Q8T4F7-2"/>
    <property type="protein sequence ID" value="FBpp0085766"/>
    <property type="gene ID" value="FBgn0000578"/>
</dbReference>
<dbReference type="EnsemblMetazoa" id="FBtr0086583">
    <molecule id="Q8T4F7-2"/>
    <property type="protein sequence ID" value="FBpp0085767"/>
    <property type="gene ID" value="FBgn0000578"/>
</dbReference>
<dbReference type="EnsemblMetazoa" id="FBtr0086584">
    <molecule id="Q8T4F7-1"/>
    <property type="protein sequence ID" value="FBpp0085768"/>
    <property type="gene ID" value="FBgn0000578"/>
</dbReference>
<dbReference type="EnsemblMetazoa" id="FBtr0100174">
    <molecule id="Q8T4F7-3"/>
    <property type="protein sequence ID" value="FBpp0099530"/>
    <property type="gene ID" value="FBgn0000578"/>
</dbReference>
<dbReference type="EnsemblMetazoa" id="FBtr0100176">
    <molecule id="Q8T4F7-2"/>
    <property type="protein sequence ID" value="FBpp0099532"/>
    <property type="gene ID" value="FBgn0000578"/>
</dbReference>
<dbReference type="EnsemblMetazoa" id="FBtr0114623">
    <molecule id="Q8T4F7-4"/>
    <property type="protein sequence ID" value="FBpp0113115"/>
    <property type="gene ID" value="FBgn0000578"/>
</dbReference>
<dbReference type="GeneID" id="37201"/>
<dbReference type="KEGG" id="dme:Dmel_CG15112"/>
<dbReference type="UCSC" id="CG15112-RA">
    <property type="organism name" value="d. melanogaster"/>
</dbReference>
<dbReference type="AGR" id="FB:FBgn0000578"/>
<dbReference type="CTD" id="37201"/>
<dbReference type="FlyBase" id="FBgn0000578">
    <property type="gene designation" value="ena"/>
</dbReference>
<dbReference type="VEuPathDB" id="VectorBase:FBgn0000578"/>
<dbReference type="eggNOG" id="KOG4590">
    <property type="taxonomic scope" value="Eukaryota"/>
</dbReference>
<dbReference type="GeneTree" id="ENSGT00940000171456"/>
<dbReference type="InParanoid" id="Q8T4F7"/>
<dbReference type="OMA" id="YQQMVQV"/>
<dbReference type="OrthoDB" id="31170at2759"/>
<dbReference type="PhylomeDB" id="Q8T4F7"/>
<dbReference type="Reactome" id="R-DME-446353">
    <property type="pathway name" value="Cell-extracellular matrix interactions"/>
</dbReference>
<dbReference type="SignaLink" id="Q8T4F7"/>
<dbReference type="BioGRID-ORCS" id="37201">
    <property type="hits" value="0 hits in 3 CRISPR screens"/>
</dbReference>
<dbReference type="ChiTaRS" id="ena">
    <property type="organism name" value="fly"/>
</dbReference>
<dbReference type="GenomeRNAi" id="37201"/>
<dbReference type="PRO" id="PR:Q8T4F7"/>
<dbReference type="Proteomes" id="UP000000803">
    <property type="component" value="Chromosome 2R"/>
</dbReference>
<dbReference type="Bgee" id="FBgn0000578">
    <property type="expression patterns" value="Expressed in hemocyte (sensu Nematoda and Protostomia) in insect leg and 250 other cell types or tissues"/>
</dbReference>
<dbReference type="ExpressionAtlas" id="Q8T4F7">
    <property type="expression patterns" value="baseline and differential"/>
</dbReference>
<dbReference type="GO" id="GO:0030424">
    <property type="term" value="C:axon"/>
    <property type="evidence" value="ECO:0000314"/>
    <property type="project" value="FlyBase"/>
</dbReference>
<dbReference type="GO" id="GO:0031252">
    <property type="term" value="C:cell leading edge"/>
    <property type="evidence" value="ECO:0000314"/>
    <property type="project" value="FlyBase"/>
</dbReference>
<dbReference type="GO" id="GO:0005856">
    <property type="term" value="C:cytoskeleton"/>
    <property type="evidence" value="ECO:0007669"/>
    <property type="project" value="UniProtKB-SubCell"/>
</dbReference>
<dbReference type="GO" id="GO:0005829">
    <property type="term" value="C:cytosol"/>
    <property type="evidence" value="ECO:0000304"/>
    <property type="project" value="Reactome"/>
</dbReference>
<dbReference type="GO" id="GO:0030425">
    <property type="term" value="C:dendrite"/>
    <property type="evidence" value="ECO:0000314"/>
    <property type="project" value="FlyBase"/>
</dbReference>
<dbReference type="GO" id="GO:0032433">
    <property type="term" value="C:filopodium tip"/>
    <property type="evidence" value="ECO:0000314"/>
    <property type="project" value="FlyBase"/>
</dbReference>
<dbReference type="GO" id="GO:0005925">
    <property type="term" value="C:focal adhesion"/>
    <property type="evidence" value="ECO:0000318"/>
    <property type="project" value="GO_Central"/>
</dbReference>
<dbReference type="GO" id="GO:0030027">
    <property type="term" value="C:lamellipodium"/>
    <property type="evidence" value="ECO:0000314"/>
    <property type="project" value="UniProtKB"/>
</dbReference>
<dbReference type="GO" id="GO:0005886">
    <property type="term" value="C:plasma membrane"/>
    <property type="evidence" value="ECO:0000318"/>
    <property type="project" value="GO_Central"/>
</dbReference>
<dbReference type="GO" id="GO:0071212">
    <property type="term" value="C:subsynaptic reticulum"/>
    <property type="evidence" value="ECO:0000314"/>
    <property type="project" value="FlyBase"/>
</dbReference>
<dbReference type="GO" id="GO:0003779">
    <property type="term" value="F:actin binding"/>
    <property type="evidence" value="ECO:0007669"/>
    <property type="project" value="UniProtKB-KW"/>
</dbReference>
<dbReference type="GO" id="GO:0017124">
    <property type="term" value="F:SH3 domain binding"/>
    <property type="evidence" value="ECO:0000314"/>
    <property type="project" value="UniProtKB"/>
</dbReference>
<dbReference type="GO" id="GO:0030036">
    <property type="term" value="P:actin cytoskeleton organization"/>
    <property type="evidence" value="ECO:0000315"/>
    <property type="project" value="FlyBase"/>
</dbReference>
<dbReference type="GO" id="GO:0007015">
    <property type="term" value="P:actin filament organization"/>
    <property type="evidence" value="ECO:0000315"/>
    <property type="project" value="FlyBase"/>
</dbReference>
<dbReference type="GO" id="GO:0008154">
    <property type="term" value="P:actin polymerization or depolymerization"/>
    <property type="evidence" value="ECO:0000318"/>
    <property type="project" value="GO_Central"/>
</dbReference>
<dbReference type="GO" id="GO:0007411">
    <property type="term" value="P:axon guidance"/>
    <property type="evidence" value="ECO:0000315"/>
    <property type="project" value="FlyBase"/>
</dbReference>
<dbReference type="GO" id="GO:0007409">
    <property type="term" value="P:axonogenesis"/>
    <property type="evidence" value="ECO:0000315"/>
    <property type="project" value="FlyBase"/>
</dbReference>
<dbReference type="GO" id="GO:0007298">
    <property type="term" value="P:border follicle cell migration"/>
    <property type="evidence" value="ECO:0000315"/>
    <property type="project" value="FlyBase"/>
</dbReference>
<dbReference type="GO" id="GO:0048749">
    <property type="term" value="P:compound eye development"/>
    <property type="evidence" value="ECO:0000316"/>
    <property type="project" value="FlyBase"/>
</dbReference>
<dbReference type="GO" id="GO:0048813">
    <property type="term" value="P:dendrite morphogenesis"/>
    <property type="evidence" value="ECO:0000315"/>
    <property type="project" value="FlyBase"/>
</dbReference>
<dbReference type="GO" id="GO:0007391">
    <property type="term" value="P:dorsal closure"/>
    <property type="evidence" value="ECO:0000316"/>
    <property type="project" value="FlyBase"/>
</dbReference>
<dbReference type="GO" id="GO:0003382">
    <property type="term" value="P:epithelial cell morphogenesis"/>
    <property type="evidence" value="ECO:0000316"/>
    <property type="project" value="FlyBase"/>
</dbReference>
<dbReference type="GO" id="GO:0046847">
    <property type="term" value="P:filopodium assembly"/>
    <property type="evidence" value="ECO:0000315"/>
    <property type="project" value="FlyBase"/>
</dbReference>
<dbReference type="GO" id="GO:0060288">
    <property type="term" value="P:formation of a compartment boundary"/>
    <property type="evidence" value="ECO:0000315"/>
    <property type="project" value="FlyBase"/>
</dbReference>
<dbReference type="GO" id="GO:0007390">
    <property type="term" value="P:germ-band shortening"/>
    <property type="evidence" value="ECO:0000315"/>
    <property type="project" value="FlyBase"/>
</dbReference>
<dbReference type="GO" id="GO:0035262">
    <property type="term" value="P:gonad morphogenesis"/>
    <property type="evidence" value="ECO:0000315"/>
    <property type="project" value="FlyBase"/>
</dbReference>
<dbReference type="GO" id="GO:0008258">
    <property type="term" value="P:head involution"/>
    <property type="evidence" value="ECO:0000315"/>
    <property type="project" value="FlyBase"/>
</dbReference>
<dbReference type="GO" id="GO:0045886">
    <property type="term" value="P:negative regulation of synaptic assembly at neuromuscular junction"/>
    <property type="evidence" value="ECO:0000315"/>
    <property type="project" value="FlyBase"/>
</dbReference>
<dbReference type="GO" id="GO:0007300">
    <property type="term" value="P:ovarian nurse cell to oocyte transport"/>
    <property type="evidence" value="ECO:0000315"/>
    <property type="project" value="FlyBase"/>
</dbReference>
<dbReference type="GO" id="GO:0030335">
    <property type="term" value="P:positive regulation of cell migration"/>
    <property type="evidence" value="ECO:0000315"/>
    <property type="project" value="FlyBase"/>
</dbReference>
<dbReference type="GO" id="GO:0031346">
    <property type="term" value="P:positive regulation of cell projection organization"/>
    <property type="evidence" value="ECO:0000314"/>
    <property type="project" value="FlyBase"/>
</dbReference>
<dbReference type="GO" id="GO:0051491">
    <property type="term" value="P:positive regulation of filopodium assembly"/>
    <property type="evidence" value="ECO:0000315"/>
    <property type="project" value="FlyBase"/>
</dbReference>
<dbReference type="GO" id="GO:0032956">
    <property type="term" value="P:regulation of actin cytoskeleton organization"/>
    <property type="evidence" value="ECO:0000353"/>
    <property type="project" value="FlyBase"/>
</dbReference>
<dbReference type="GO" id="GO:0051489">
    <property type="term" value="P:regulation of filopodium assembly"/>
    <property type="evidence" value="ECO:0000315"/>
    <property type="project" value="FlyBase"/>
</dbReference>
<dbReference type="GO" id="GO:0010591">
    <property type="term" value="P:regulation of lamellipodium assembly"/>
    <property type="evidence" value="ECO:0000315"/>
    <property type="project" value="FlyBase"/>
</dbReference>
<dbReference type="GO" id="GO:1990255">
    <property type="term" value="P:subsynaptic reticulum organization"/>
    <property type="evidence" value="ECO:0000315"/>
    <property type="project" value="FlyBase"/>
</dbReference>
<dbReference type="GO" id="GO:0007396">
    <property type="term" value="P:suture of dorsal opening"/>
    <property type="evidence" value="ECO:0000315"/>
    <property type="project" value="FlyBase"/>
</dbReference>
<dbReference type="CDD" id="cd01207">
    <property type="entry name" value="EVH1_Ena_VASP-like"/>
    <property type="match status" value="1"/>
</dbReference>
<dbReference type="FunFam" id="1.20.5.1160:FF:000011">
    <property type="entry name" value="protein enabled isoform X5"/>
    <property type="match status" value="1"/>
</dbReference>
<dbReference type="FunFam" id="2.30.29.30:FF:000047">
    <property type="entry name" value="vasodilator-stimulated phosphoprotein isoform X2"/>
    <property type="match status" value="1"/>
</dbReference>
<dbReference type="Gene3D" id="2.30.29.30">
    <property type="entry name" value="Pleckstrin-homology domain (PH domain)/Phosphotyrosine-binding domain (PTB)"/>
    <property type="match status" value="1"/>
</dbReference>
<dbReference type="Gene3D" id="1.20.5.1160">
    <property type="entry name" value="Vasodilator-stimulated phosphoprotein"/>
    <property type="match status" value="1"/>
</dbReference>
<dbReference type="InterPro" id="IPR011993">
    <property type="entry name" value="PH-like_dom_sf"/>
</dbReference>
<dbReference type="InterPro" id="IPR038023">
    <property type="entry name" value="VASP_sf"/>
</dbReference>
<dbReference type="InterPro" id="IPR014885">
    <property type="entry name" value="VASP_tetra"/>
</dbReference>
<dbReference type="InterPro" id="IPR000697">
    <property type="entry name" value="WH1/EVH1_dom"/>
</dbReference>
<dbReference type="PANTHER" id="PTHR11202:SF22">
    <property type="entry name" value="PROTEIN ENABLED"/>
    <property type="match status" value="1"/>
</dbReference>
<dbReference type="PANTHER" id="PTHR11202">
    <property type="entry name" value="SPROUTY-RELATED, EVH1 DOMAIN-CONTAINING PROTEIN FAMILY MEMBER"/>
    <property type="match status" value="1"/>
</dbReference>
<dbReference type="Pfam" id="PF08776">
    <property type="entry name" value="VASP_tetra"/>
    <property type="match status" value="1"/>
</dbReference>
<dbReference type="Pfam" id="PF00568">
    <property type="entry name" value="WH1"/>
    <property type="match status" value="1"/>
</dbReference>
<dbReference type="SMART" id="SM00461">
    <property type="entry name" value="WH1"/>
    <property type="match status" value="1"/>
</dbReference>
<dbReference type="SUPFAM" id="SSF50729">
    <property type="entry name" value="PH domain-like"/>
    <property type="match status" value="1"/>
</dbReference>
<dbReference type="SUPFAM" id="SSF118370">
    <property type="entry name" value="Vasodilator-stimulated phosphoprotein, VASP, tetramerisation domain"/>
    <property type="match status" value="1"/>
</dbReference>
<dbReference type="PROSITE" id="PS50229">
    <property type="entry name" value="WH1"/>
    <property type="match status" value="1"/>
</dbReference>
<reference key="1">
    <citation type="journal article" date="1995" name="Genes Dev.">
        <title>Enabled, a dosage-sensitive suppressor of mutations in the Drosophila Abl tyrosine kinase, encodes an Abl substrate with SH3 domain-binding properties.</title>
        <authorList>
            <person name="Gertler F.B."/>
            <person name="Comer A.R."/>
            <person name="Juang J.-L."/>
            <person name="Ahern S.M."/>
            <person name="Clark M.J."/>
            <person name="Liebl E.C."/>
            <person name="Hoffmann F.M."/>
        </authorList>
    </citation>
    <scope>NUCLEOTIDE SEQUENCE [GENOMIC DNA]</scope>
    <scope>ALTERNATIVE SPLICING (ISOFORM 2)</scope>
    <scope>INTERACTION WITH ABL AND SRC</scope>
    <scope>PHOSPHORYLATION</scope>
    <scope>TISSUE SPECIFICITY</scope>
    <source>
        <tissue>Embryo</tissue>
    </source>
</reference>
<reference key="2">
    <citation type="journal article" date="2000" name="Science">
        <title>The genome sequence of Drosophila melanogaster.</title>
        <authorList>
            <person name="Adams M.D."/>
            <person name="Celniker S.E."/>
            <person name="Holt R.A."/>
            <person name="Evans C.A."/>
            <person name="Gocayne J.D."/>
            <person name="Amanatides P.G."/>
            <person name="Scherer S.E."/>
            <person name="Li P.W."/>
            <person name="Hoskins R.A."/>
            <person name="Galle R.F."/>
            <person name="George R.A."/>
            <person name="Lewis S.E."/>
            <person name="Richards S."/>
            <person name="Ashburner M."/>
            <person name="Henderson S.N."/>
            <person name="Sutton G.G."/>
            <person name="Wortman J.R."/>
            <person name="Yandell M.D."/>
            <person name="Zhang Q."/>
            <person name="Chen L.X."/>
            <person name="Brandon R.C."/>
            <person name="Rogers Y.-H.C."/>
            <person name="Blazej R.G."/>
            <person name="Champe M."/>
            <person name="Pfeiffer B.D."/>
            <person name="Wan K.H."/>
            <person name="Doyle C."/>
            <person name="Baxter E.G."/>
            <person name="Helt G."/>
            <person name="Nelson C.R."/>
            <person name="Miklos G.L.G."/>
            <person name="Abril J.F."/>
            <person name="Agbayani A."/>
            <person name="An H.-J."/>
            <person name="Andrews-Pfannkoch C."/>
            <person name="Baldwin D."/>
            <person name="Ballew R.M."/>
            <person name="Basu A."/>
            <person name="Baxendale J."/>
            <person name="Bayraktaroglu L."/>
            <person name="Beasley E.M."/>
            <person name="Beeson K.Y."/>
            <person name="Benos P.V."/>
            <person name="Berman B.P."/>
            <person name="Bhandari D."/>
            <person name="Bolshakov S."/>
            <person name="Borkova D."/>
            <person name="Botchan M.R."/>
            <person name="Bouck J."/>
            <person name="Brokstein P."/>
            <person name="Brottier P."/>
            <person name="Burtis K.C."/>
            <person name="Busam D.A."/>
            <person name="Butler H."/>
            <person name="Cadieu E."/>
            <person name="Center A."/>
            <person name="Chandra I."/>
            <person name="Cherry J.M."/>
            <person name="Cawley S."/>
            <person name="Dahlke C."/>
            <person name="Davenport L.B."/>
            <person name="Davies P."/>
            <person name="de Pablos B."/>
            <person name="Delcher A."/>
            <person name="Deng Z."/>
            <person name="Mays A.D."/>
            <person name="Dew I."/>
            <person name="Dietz S.M."/>
            <person name="Dodson K."/>
            <person name="Doup L.E."/>
            <person name="Downes M."/>
            <person name="Dugan-Rocha S."/>
            <person name="Dunkov B.C."/>
            <person name="Dunn P."/>
            <person name="Durbin K.J."/>
            <person name="Evangelista C.C."/>
            <person name="Ferraz C."/>
            <person name="Ferriera S."/>
            <person name="Fleischmann W."/>
            <person name="Fosler C."/>
            <person name="Gabrielian A.E."/>
            <person name="Garg N.S."/>
            <person name="Gelbart W.M."/>
            <person name="Glasser K."/>
            <person name="Glodek A."/>
            <person name="Gong F."/>
            <person name="Gorrell J.H."/>
            <person name="Gu Z."/>
            <person name="Guan P."/>
            <person name="Harris M."/>
            <person name="Harris N.L."/>
            <person name="Harvey D.A."/>
            <person name="Heiman T.J."/>
            <person name="Hernandez J.R."/>
            <person name="Houck J."/>
            <person name="Hostin D."/>
            <person name="Houston K.A."/>
            <person name="Howland T.J."/>
            <person name="Wei M.-H."/>
            <person name="Ibegwam C."/>
            <person name="Jalali M."/>
            <person name="Kalush F."/>
            <person name="Karpen G.H."/>
            <person name="Ke Z."/>
            <person name="Kennison J.A."/>
            <person name="Ketchum K.A."/>
            <person name="Kimmel B.E."/>
            <person name="Kodira C.D."/>
            <person name="Kraft C.L."/>
            <person name="Kravitz S."/>
            <person name="Kulp D."/>
            <person name="Lai Z."/>
            <person name="Lasko P."/>
            <person name="Lei Y."/>
            <person name="Levitsky A.A."/>
            <person name="Li J.H."/>
            <person name="Li Z."/>
            <person name="Liang Y."/>
            <person name="Lin X."/>
            <person name="Liu X."/>
            <person name="Mattei B."/>
            <person name="McIntosh T.C."/>
            <person name="McLeod M.P."/>
            <person name="McPherson D."/>
            <person name="Merkulov G."/>
            <person name="Milshina N.V."/>
            <person name="Mobarry C."/>
            <person name="Morris J."/>
            <person name="Moshrefi A."/>
            <person name="Mount S.M."/>
            <person name="Moy M."/>
            <person name="Murphy B."/>
            <person name="Murphy L."/>
            <person name="Muzny D.M."/>
            <person name="Nelson D.L."/>
            <person name="Nelson D.R."/>
            <person name="Nelson K.A."/>
            <person name="Nixon K."/>
            <person name="Nusskern D.R."/>
            <person name="Pacleb J.M."/>
            <person name="Palazzolo M."/>
            <person name="Pittman G.S."/>
            <person name="Pan S."/>
            <person name="Pollard J."/>
            <person name="Puri V."/>
            <person name="Reese M.G."/>
            <person name="Reinert K."/>
            <person name="Remington K."/>
            <person name="Saunders R.D.C."/>
            <person name="Scheeler F."/>
            <person name="Shen H."/>
            <person name="Shue B.C."/>
            <person name="Siden-Kiamos I."/>
            <person name="Simpson M."/>
            <person name="Skupski M.P."/>
            <person name="Smith T.J."/>
            <person name="Spier E."/>
            <person name="Spradling A.C."/>
            <person name="Stapleton M."/>
            <person name="Strong R."/>
            <person name="Sun E."/>
            <person name="Svirskas R."/>
            <person name="Tector C."/>
            <person name="Turner R."/>
            <person name="Venter E."/>
            <person name="Wang A.H."/>
            <person name="Wang X."/>
            <person name="Wang Z.-Y."/>
            <person name="Wassarman D.A."/>
            <person name="Weinstock G.M."/>
            <person name="Weissenbach J."/>
            <person name="Williams S.M."/>
            <person name="Woodage T."/>
            <person name="Worley K.C."/>
            <person name="Wu D."/>
            <person name="Yang S."/>
            <person name="Yao Q.A."/>
            <person name="Ye J."/>
            <person name="Yeh R.-F."/>
            <person name="Zaveri J.S."/>
            <person name="Zhan M."/>
            <person name="Zhang G."/>
            <person name="Zhao Q."/>
            <person name="Zheng L."/>
            <person name="Zheng X.H."/>
            <person name="Zhong F.N."/>
            <person name="Zhong W."/>
            <person name="Zhou X."/>
            <person name="Zhu S.C."/>
            <person name="Zhu X."/>
            <person name="Smith H.O."/>
            <person name="Gibbs R.A."/>
            <person name="Myers E.W."/>
            <person name="Rubin G.M."/>
            <person name="Venter J.C."/>
        </authorList>
    </citation>
    <scope>NUCLEOTIDE SEQUENCE [LARGE SCALE GENOMIC DNA]</scope>
    <source>
        <strain>Berkeley</strain>
    </source>
</reference>
<reference key="3">
    <citation type="journal article" date="2002" name="Genome Biol.">
        <title>Annotation of the Drosophila melanogaster euchromatic genome: a systematic review.</title>
        <authorList>
            <person name="Misra S."/>
            <person name="Crosby M.A."/>
            <person name="Mungall C.J."/>
            <person name="Matthews B.B."/>
            <person name="Campbell K.S."/>
            <person name="Hradecky P."/>
            <person name="Huang Y."/>
            <person name="Kaminker J.S."/>
            <person name="Millburn G.H."/>
            <person name="Prochnik S.E."/>
            <person name="Smith C.D."/>
            <person name="Tupy J.L."/>
            <person name="Whitfield E.J."/>
            <person name="Bayraktaroglu L."/>
            <person name="Berman B.P."/>
            <person name="Bettencourt B.R."/>
            <person name="Celniker S.E."/>
            <person name="de Grey A.D.N.J."/>
            <person name="Drysdale R.A."/>
            <person name="Harris N.L."/>
            <person name="Richter J."/>
            <person name="Russo S."/>
            <person name="Schroeder A.J."/>
            <person name="Shu S.Q."/>
            <person name="Stapleton M."/>
            <person name="Yamada C."/>
            <person name="Ashburner M."/>
            <person name="Gelbart W.M."/>
            <person name="Rubin G.M."/>
            <person name="Lewis S.E."/>
        </authorList>
    </citation>
    <scope>GENOME REANNOTATION</scope>
    <scope>ALTERNATIVE SPLICING</scope>
    <source>
        <strain>Berkeley</strain>
    </source>
</reference>
<reference key="4">
    <citation type="journal article" date="2002" name="Genome Biol.">
        <title>A Drosophila full-length cDNA resource.</title>
        <authorList>
            <person name="Stapleton M."/>
            <person name="Carlson J.W."/>
            <person name="Brokstein P."/>
            <person name="Yu C."/>
            <person name="Champe M."/>
            <person name="George R.A."/>
            <person name="Guarin H."/>
            <person name="Kronmiller B."/>
            <person name="Pacleb J.M."/>
            <person name="Park S."/>
            <person name="Wan K.H."/>
            <person name="Rubin G.M."/>
            <person name="Celniker S.E."/>
        </authorList>
    </citation>
    <scope>NUCLEOTIDE SEQUENCE [LARGE SCALE MRNA] (ISOFORM 1)</scope>
    <source>
        <strain>Berkeley</strain>
        <tissue>Embryo</tissue>
    </source>
</reference>
<reference key="5">
    <citation type="submission" date="2003-02" db="EMBL/GenBank/DDBJ databases">
        <authorList>
            <person name="Stapleton M."/>
            <person name="Brokstein P."/>
            <person name="Hong L."/>
            <person name="Agbayani A."/>
            <person name="Carlson J.W."/>
            <person name="Champe M."/>
            <person name="Chavez C."/>
            <person name="Dorsett V."/>
            <person name="Dresnek D."/>
            <person name="Farfan D."/>
            <person name="Frise E."/>
            <person name="George R.A."/>
            <person name="Gonzalez M."/>
            <person name="Guarin H."/>
            <person name="Kronmiller B."/>
            <person name="Li P.W."/>
            <person name="Liao G."/>
            <person name="Miranda A."/>
            <person name="Mungall C.J."/>
            <person name="Nunoo J."/>
            <person name="Pacleb J.M."/>
            <person name="Paragas V."/>
            <person name="Park S."/>
            <person name="Patel S."/>
            <person name="Phouanenavong S."/>
            <person name="Wan K.H."/>
            <person name="Yu C."/>
            <person name="Lewis S.E."/>
            <person name="Rubin G.M."/>
            <person name="Celniker S.E."/>
        </authorList>
    </citation>
    <scope>NUCLEOTIDE SEQUENCE [LARGE SCALE MRNA] (ISOFORM 3)</scope>
    <source>
        <strain>Berkeley</strain>
        <tissue>Embryo</tissue>
    </source>
</reference>
<reference key="6">
    <citation type="journal article" date="2005" name="Development">
        <title>The Abelson tyrosine kinase, the Trio GEF and Enabled interact with the Netrin receptor Frazzled in Drosophila.</title>
        <authorList>
            <person name="Forsthoefel D.J."/>
            <person name="Liebl E.C."/>
            <person name="Kolodziej P.A."/>
            <person name="Seeger M.A."/>
        </authorList>
    </citation>
    <scope>FUNCTION</scope>
</reference>
<reference key="7">
    <citation type="journal article" date="1998" name="Mol. Cell. Biol.">
        <title>Phosphorylation of Enabled by the Drosophila Abelson tyrosine kinase regulates the in vivo function and protein-protein interactions of Enabled.</title>
        <authorList>
            <person name="Comer A.R."/>
            <person name="Ahern-Djamali S.M."/>
            <person name="Juang J.-L."/>
            <person name="Jackson P.D."/>
            <person name="Hoffmann F.M."/>
        </authorList>
    </citation>
    <scope>PHOSPHORYLATION AT TYR-425; TYR-607; TYR-625; TYR-650; TYR-666 AND TYR-826</scope>
</reference>
<reference key="8">
    <citation type="journal article" date="1999" name="Proc. Natl. Acad. Sci. U.S.A.">
        <title>Identification of profilin and src homology 3 domains as binding partners for Drosophila enabled.</title>
        <authorList>
            <person name="Ahern-Djamali S.M."/>
            <person name="Bachmann C."/>
            <person name="Hua P."/>
            <person name="Reddy S.K."/>
            <person name="Kastenmeier A.S."/>
            <person name="Walter U."/>
            <person name="Hoffmann F.M."/>
        </authorList>
    </citation>
    <scope>INTERACTION WITH CHIC</scope>
</reference>
<reference key="9">
    <citation type="journal article" date="2000" name="Cell">
        <title>Repulsive axon guidance: Abelson and Enabled play opposing roles downstream of the roundabout receptor.</title>
        <authorList>
            <person name="Bashaw G.J."/>
            <person name="Kidd T."/>
            <person name="Murray D."/>
            <person name="Pawson T."/>
            <person name="Goodman C.S."/>
        </authorList>
    </citation>
    <scope>INTERACTION WITH ROBO</scope>
</reference>
<reference key="10">
    <citation type="journal article" date="2003" name="Gene">
        <title>Molecular and phylogenetic characterization of Zyx102, a Drosophila orthologue of the zyxin family that interacts with Drosophila Enabled.</title>
        <authorList>
            <person name="Renfranz P.J."/>
            <person name="Siegrist S.E."/>
            <person name="Stronach B.E."/>
            <person name="Macalma T."/>
            <person name="Beckerle M.C."/>
        </authorList>
    </citation>
    <scope>INTERACTION WITH ZYX102EF</scope>
</reference>
<reference key="11">
    <citation type="journal article" date="2004" name="J. Cell Sci.">
        <title>Cascade pathway of filopodia formation downstream of SCAR.</title>
        <authorList>
            <person name="Biyasheva A."/>
            <person name="Svitkina T."/>
            <person name="Kunda P."/>
            <person name="Baum B."/>
            <person name="Borisy G."/>
        </authorList>
    </citation>
    <scope>SUBCELLULAR LOCATION</scope>
</reference>
<reference key="12">
    <citation type="journal article" date="2007" name="Mol. Biosyst.">
        <title>An integrated chemical, mass spectrometric and computational strategy for (quantitative) phosphoproteomics: application to Drosophila melanogaster Kc167 cells.</title>
        <authorList>
            <person name="Bodenmiller B."/>
            <person name="Mueller L.N."/>
            <person name="Pedrioli P.G.A."/>
            <person name="Pflieger D."/>
            <person name="Juenger M.A."/>
            <person name="Eng J.K."/>
            <person name="Aebersold R."/>
            <person name="Tao W.A."/>
        </authorList>
    </citation>
    <scope>PHOSPHORYLATION [LARGE SCALE ANALYSIS] AT SER-924</scope>
    <scope>IDENTIFICATION BY MASS SPECTROMETRY</scope>
</reference>
<reference key="13">
    <citation type="journal article" date="2008" name="J. Proteome Res.">
        <title>Phosphoproteome analysis of Drosophila melanogaster embryos.</title>
        <authorList>
            <person name="Zhai B."/>
            <person name="Villen J."/>
            <person name="Beausoleil S.A."/>
            <person name="Mintseris J."/>
            <person name="Gygi S.P."/>
        </authorList>
    </citation>
    <scope>PHOSPHORYLATION [LARGE SCALE ANALYSIS] AT SER-905; SER-914 AND SER-924</scope>
    <scope>IDENTIFICATION BY MASS SPECTROMETRY</scope>
    <source>
        <tissue>Embryo</tissue>
    </source>
</reference>